<name>RIMP_PELPB</name>
<protein>
    <recommendedName>
        <fullName evidence="1">Ribosome maturation factor RimP</fullName>
    </recommendedName>
</protein>
<sequence>MQERINNCVTQVLAESAGTRGEGAYLIDIKVKGKGSGRKIEILMDADDGIRIHQCAYISRRVRERIEGDDDLLELVGENFDLMVSSPGLGEPIIIPRQYIRHVGKLLQVTYADSNGDPVELVGHLQEVSLLDEHGAKIVIMPEQKKKKGQQPKTEAVILYLNQVIRAIPEAEL</sequence>
<dbReference type="EMBL" id="CP001110">
    <property type="protein sequence ID" value="ACF42725.1"/>
    <property type="molecule type" value="Genomic_DNA"/>
</dbReference>
<dbReference type="RefSeq" id="WP_012507220.1">
    <property type="nucleotide sequence ID" value="NC_011060.1"/>
</dbReference>
<dbReference type="SMR" id="B4SCE5"/>
<dbReference type="STRING" id="324925.Ppha_0396"/>
<dbReference type="KEGG" id="pph:Ppha_0396"/>
<dbReference type="eggNOG" id="COG0779">
    <property type="taxonomic scope" value="Bacteria"/>
</dbReference>
<dbReference type="HOGENOM" id="CLU_070525_3_1_10"/>
<dbReference type="OrthoDB" id="9789702at2"/>
<dbReference type="Proteomes" id="UP000002724">
    <property type="component" value="Chromosome"/>
</dbReference>
<dbReference type="GO" id="GO:0005737">
    <property type="term" value="C:cytoplasm"/>
    <property type="evidence" value="ECO:0007669"/>
    <property type="project" value="UniProtKB-SubCell"/>
</dbReference>
<dbReference type="GO" id="GO:0042274">
    <property type="term" value="P:ribosomal small subunit biogenesis"/>
    <property type="evidence" value="ECO:0007669"/>
    <property type="project" value="UniProtKB-UniRule"/>
</dbReference>
<dbReference type="Gene3D" id="3.30.300.70">
    <property type="entry name" value="RimP-like superfamily, N-terminal"/>
    <property type="match status" value="1"/>
</dbReference>
<dbReference type="HAMAP" id="MF_01077">
    <property type="entry name" value="RimP"/>
    <property type="match status" value="1"/>
</dbReference>
<dbReference type="InterPro" id="IPR003728">
    <property type="entry name" value="Ribosome_maturation_RimP"/>
</dbReference>
<dbReference type="InterPro" id="IPR028989">
    <property type="entry name" value="RimP_N"/>
</dbReference>
<dbReference type="InterPro" id="IPR035956">
    <property type="entry name" value="RimP_N_sf"/>
</dbReference>
<dbReference type="NCBIfam" id="NF011234">
    <property type="entry name" value="PRK14641.1"/>
    <property type="match status" value="1"/>
</dbReference>
<dbReference type="PANTHER" id="PTHR33867">
    <property type="entry name" value="RIBOSOME MATURATION FACTOR RIMP"/>
    <property type="match status" value="1"/>
</dbReference>
<dbReference type="PANTHER" id="PTHR33867:SF1">
    <property type="entry name" value="RIBOSOME MATURATION FACTOR RIMP"/>
    <property type="match status" value="1"/>
</dbReference>
<dbReference type="Pfam" id="PF02576">
    <property type="entry name" value="RimP_N"/>
    <property type="match status" value="1"/>
</dbReference>
<dbReference type="SUPFAM" id="SSF75420">
    <property type="entry name" value="YhbC-like, N-terminal domain"/>
    <property type="match status" value="1"/>
</dbReference>
<reference key="1">
    <citation type="submission" date="2008-06" db="EMBL/GenBank/DDBJ databases">
        <title>Complete sequence of Pelodictyon phaeoclathratiforme BU-1.</title>
        <authorList>
            <consortium name="US DOE Joint Genome Institute"/>
            <person name="Lucas S."/>
            <person name="Copeland A."/>
            <person name="Lapidus A."/>
            <person name="Glavina del Rio T."/>
            <person name="Dalin E."/>
            <person name="Tice H."/>
            <person name="Bruce D."/>
            <person name="Goodwin L."/>
            <person name="Pitluck S."/>
            <person name="Schmutz J."/>
            <person name="Larimer F."/>
            <person name="Land M."/>
            <person name="Hauser L."/>
            <person name="Kyrpides N."/>
            <person name="Mikhailova N."/>
            <person name="Liu Z."/>
            <person name="Li T."/>
            <person name="Zhao F."/>
            <person name="Overmann J."/>
            <person name="Bryant D.A."/>
            <person name="Richardson P."/>
        </authorList>
    </citation>
    <scope>NUCLEOTIDE SEQUENCE [LARGE SCALE GENOMIC DNA]</scope>
    <source>
        <strain>DSM 5477 / BU-1</strain>
    </source>
</reference>
<keyword id="KW-0963">Cytoplasm</keyword>
<keyword id="KW-1185">Reference proteome</keyword>
<keyword id="KW-0690">Ribosome biogenesis</keyword>
<evidence type="ECO:0000255" key="1">
    <source>
        <dbReference type="HAMAP-Rule" id="MF_01077"/>
    </source>
</evidence>
<gene>
    <name evidence="1" type="primary">rimP</name>
    <name type="ordered locus">Ppha_0396</name>
</gene>
<organism>
    <name type="scientific">Pelodictyon phaeoclathratiforme (strain DSM 5477 / BU-1)</name>
    <dbReference type="NCBI Taxonomy" id="324925"/>
    <lineage>
        <taxon>Bacteria</taxon>
        <taxon>Pseudomonadati</taxon>
        <taxon>Chlorobiota</taxon>
        <taxon>Chlorobiia</taxon>
        <taxon>Chlorobiales</taxon>
        <taxon>Chlorobiaceae</taxon>
        <taxon>Chlorobium/Pelodictyon group</taxon>
        <taxon>Pelodictyon</taxon>
    </lineage>
</organism>
<feature type="chain" id="PRO_0000384728" description="Ribosome maturation factor RimP">
    <location>
        <begin position="1"/>
        <end position="173"/>
    </location>
</feature>
<accession>B4SCE5</accession>
<proteinExistence type="inferred from homology"/>
<comment type="function">
    <text evidence="1">Required for maturation of 30S ribosomal subunits.</text>
</comment>
<comment type="subcellular location">
    <subcellularLocation>
        <location evidence="1">Cytoplasm</location>
    </subcellularLocation>
</comment>
<comment type="similarity">
    <text evidence="1">Belongs to the RimP family.</text>
</comment>